<sequence>MRALWVLGLCCVLLTFGSVRAEDEVDVDGTVEEDLGKSREGSRTDDEVVQREEEAIQLDGLNASQIRELREKSEKFAFQAEVNRMMKLIINSLYKNKEIFLRELISNASDALDKIRLISLTDENALAGNEELTVKIKCDKEKNLLHVTDTGVGMTREELVKNLGTIAKSGTSEFLNKMAEAQEDGQSTSELIGQFGVGFYSAFLVADKVIVTSKHNNDTQHIWESDSNEFSVIADPRGNTLGRGTTITLVLKEEASDYLELDTIKNLVKKYSQFINFPIYVWSSKTETVEEPMEEEEAAKEEKEESDDEAAVEEEEEEKKPKTKKVEKTVWDWELMNDIKPIWQRPSKEVEDDEYKAFYKSFSKESDDPMAYIHFTAEGEVTFKSILFVPTSAPRGLFDEYGSKKSDYIKLYVRRVFITDDFHDMMPKYLNFVKGVVDSDDLPLNVSRETLQQHKLLKVIRKKLVRKTLDMIKKIADEKYNDTFWKEFGTNIKLGVIEDHSNRTRLAKLLRFQSSHHPSDITSLDQYVERMKEKQDKIYFMAGSSRKEAESSPFVERLLKKGYEVIYLTEPVDEYCIQALPEFDGKRFQNVAKEGVKFDESEKSKENREAVEKEFEPLLNWMKDKALKDKIEKAVVSQRLTESPCALVASQYGWSGNMERIMKAQAYQTGKDISTNYYASQKKTFEINPRHPLIRDMLRRVKEDEDDKTVSDLAVVLFETATLRSGYLLPDTKAYGDRIERMLRLSLNIDPDAKVEEEPEEEPEETTEDTTEDTEQDDDEEMDAGADEEEQETSETSTAEKDEL</sequence>
<keyword id="KW-0007">Acetylation</keyword>
<keyword id="KW-0067">ATP-binding</keyword>
<keyword id="KW-0106">Calcium</keyword>
<keyword id="KW-0143">Chaperone</keyword>
<keyword id="KW-1015">Disulfide bond</keyword>
<keyword id="KW-0256">Endoplasmic reticulum</keyword>
<keyword id="KW-0325">Glycoprotein</keyword>
<keyword id="KW-0378">Hydrolase</keyword>
<keyword id="KW-0379">Hydroxylation</keyword>
<keyword id="KW-0547">Nucleotide-binding</keyword>
<keyword id="KW-0597">Phosphoprotein</keyword>
<keyword id="KW-1185">Reference proteome</keyword>
<keyword id="KW-0703">Sarcoplasmic reticulum</keyword>
<keyword id="KW-0732">Signal</keyword>
<evidence type="ECO:0000250" key="1">
    <source>
        <dbReference type="UniProtKB" id="P08113"/>
    </source>
</evidence>
<evidence type="ECO:0000250" key="2">
    <source>
        <dbReference type="UniProtKB" id="P14625"/>
    </source>
</evidence>
<evidence type="ECO:0000250" key="3">
    <source>
        <dbReference type="UniProtKB" id="P41148"/>
    </source>
</evidence>
<evidence type="ECO:0000250" key="4">
    <source>
        <dbReference type="UniProtKB" id="Q66HD0"/>
    </source>
</evidence>
<evidence type="ECO:0000255" key="5"/>
<evidence type="ECO:0000256" key="6">
    <source>
        <dbReference type="SAM" id="MobiDB-lite"/>
    </source>
</evidence>
<evidence type="ECO:0000305" key="7"/>
<organism>
    <name type="scientific">Sus scrofa</name>
    <name type="common">Pig</name>
    <dbReference type="NCBI Taxonomy" id="9823"/>
    <lineage>
        <taxon>Eukaryota</taxon>
        <taxon>Metazoa</taxon>
        <taxon>Chordata</taxon>
        <taxon>Craniata</taxon>
        <taxon>Vertebrata</taxon>
        <taxon>Euteleostomi</taxon>
        <taxon>Mammalia</taxon>
        <taxon>Eutheria</taxon>
        <taxon>Laurasiatheria</taxon>
        <taxon>Artiodactyla</taxon>
        <taxon>Suina</taxon>
        <taxon>Suidae</taxon>
        <taxon>Sus</taxon>
    </lineage>
</organism>
<dbReference type="EC" id="3.6.4.-" evidence="3"/>
<dbReference type="EMBL" id="X76301">
    <property type="protein sequence ID" value="CAA53948.1"/>
    <property type="molecule type" value="mRNA"/>
</dbReference>
<dbReference type="EMBL" id="Y09136">
    <property type="protein sequence ID" value="CAA70347.1"/>
    <property type="molecule type" value="mRNA"/>
</dbReference>
<dbReference type="EMBL" id="X90848">
    <property type="protein sequence ID" value="CAA62352.1"/>
    <property type="molecule type" value="Genomic_DNA"/>
</dbReference>
<dbReference type="PIR" id="PL0137">
    <property type="entry name" value="PL0137"/>
</dbReference>
<dbReference type="PIR" id="S51358">
    <property type="entry name" value="S51358"/>
</dbReference>
<dbReference type="RefSeq" id="NP_999268.1">
    <property type="nucleotide sequence ID" value="NM_214103.1"/>
</dbReference>
<dbReference type="SMR" id="Q29092"/>
<dbReference type="ELM" id="Q29092"/>
<dbReference type="FunCoup" id="Q29092">
    <property type="interactions" value="1592"/>
</dbReference>
<dbReference type="STRING" id="9823.ENSSSCP00000000906"/>
<dbReference type="BindingDB" id="Q29092"/>
<dbReference type="ChEMBL" id="CHEMBL3425397"/>
<dbReference type="GlyCosmos" id="Q29092">
    <property type="glycosylation" value="6 sites, No reported glycans"/>
</dbReference>
<dbReference type="GlyGen" id="Q29092">
    <property type="glycosylation" value="6 sites"/>
</dbReference>
<dbReference type="PaxDb" id="9823-ENSSSCP00000000906"/>
<dbReference type="PeptideAtlas" id="Q29092"/>
<dbReference type="GeneID" id="397191"/>
<dbReference type="KEGG" id="ssc:397191"/>
<dbReference type="CTD" id="7184"/>
<dbReference type="eggNOG" id="KOG0020">
    <property type="taxonomic scope" value="Eukaryota"/>
</dbReference>
<dbReference type="InParanoid" id="Q29092"/>
<dbReference type="OrthoDB" id="5426351at2759"/>
<dbReference type="PRO" id="PR:Q29092"/>
<dbReference type="Proteomes" id="UP000008227">
    <property type="component" value="Unplaced"/>
</dbReference>
<dbReference type="Proteomes" id="UP000314985">
    <property type="component" value="Unplaced"/>
</dbReference>
<dbReference type="Proteomes" id="UP000694570">
    <property type="component" value="Unplaced"/>
</dbReference>
<dbReference type="Proteomes" id="UP000694571">
    <property type="component" value="Unplaced"/>
</dbReference>
<dbReference type="Proteomes" id="UP000694720">
    <property type="component" value="Unplaced"/>
</dbReference>
<dbReference type="Proteomes" id="UP000694722">
    <property type="component" value="Unplaced"/>
</dbReference>
<dbReference type="Proteomes" id="UP000694723">
    <property type="component" value="Unplaced"/>
</dbReference>
<dbReference type="Proteomes" id="UP000694724">
    <property type="component" value="Unplaced"/>
</dbReference>
<dbReference type="Proteomes" id="UP000694725">
    <property type="component" value="Unplaced"/>
</dbReference>
<dbReference type="Proteomes" id="UP000694726">
    <property type="component" value="Unplaced"/>
</dbReference>
<dbReference type="Proteomes" id="UP000694727">
    <property type="component" value="Unplaced"/>
</dbReference>
<dbReference type="Proteomes" id="UP000694728">
    <property type="component" value="Unplaced"/>
</dbReference>
<dbReference type="GO" id="GO:0005783">
    <property type="term" value="C:endoplasmic reticulum"/>
    <property type="evidence" value="ECO:0000318"/>
    <property type="project" value="GO_Central"/>
</dbReference>
<dbReference type="GO" id="GO:0042470">
    <property type="term" value="C:melanosome"/>
    <property type="evidence" value="ECO:0007669"/>
    <property type="project" value="UniProtKB-SubCell"/>
</dbReference>
<dbReference type="GO" id="GO:0048471">
    <property type="term" value="C:perinuclear region of cytoplasm"/>
    <property type="evidence" value="ECO:0000318"/>
    <property type="project" value="GO_Central"/>
</dbReference>
<dbReference type="GO" id="GO:0033018">
    <property type="term" value="C:sarcoplasmic reticulum lumen"/>
    <property type="evidence" value="ECO:0007669"/>
    <property type="project" value="UniProtKB-SubCell"/>
</dbReference>
<dbReference type="GO" id="GO:0005524">
    <property type="term" value="F:ATP binding"/>
    <property type="evidence" value="ECO:0000318"/>
    <property type="project" value="GO_Central"/>
</dbReference>
<dbReference type="GO" id="GO:0016887">
    <property type="term" value="F:ATP hydrolysis activity"/>
    <property type="evidence" value="ECO:0000318"/>
    <property type="project" value="GO_Central"/>
</dbReference>
<dbReference type="GO" id="GO:0140662">
    <property type="term" value="F:ATP-dependent protein folding chaperone"/>
    <property type="evidence" value="ECO:0007669"/>
    <property type="project" value="InterPro"/>
</dbReference>
<dbReference type="GO" id="GO:0051082">
    <property type="term" value="F:unfolded protein binding"/>
    <property type="evidence" value="ECO:0000318"/>
    <property type="project" value="GO_Central"/>
</dbReference>
<dbReference type="GO" id="GO:0036503">
    <property type="term" value="P:ERAD pathway"/>
    <property type="evidence" value="ECO:0000250"/>
    <property type="project" value="UniProtKB"/>
</dbReference>
<dbReference type="GO" id="GO:0006457">
    <property type="term" value="P:protein folding"/>
    <property type="evidence" value="ECO:0000318"/>
    <property type="project" value="GO_Central"/>
</dbReference>
<dbReference type="CDD" id="cd16927">
    <property type="entry name" value="HATPase_Hsp90-like"/>
    <property type="match status" value="1"/>
</dbReference>
<dbReference type="FunFam" id="3.30.230.80:FF:000003">
    <property type="entry name" value="endoplasmin isoform X1"/>
    <property type="match status" value="1"/>
</dbReference>
<dbReference type="FunFam" id="1.20.120.790:FF:000003">
    <property type="entry name" value="Heat shock protein 90"/>
    <property type="match status" value="1"/>
</dbReference>
<dbReference type="FunFam" id="3.30.565.10:FF:000005">
    <property type="entry name" value="Heat shock protein 90"/>
    <property type="match status" value="1"/>
</dbReference>
<dbReference type="FunFam" id="3.40.50.11260:FF:000003">
    <property type="entry name" value="Heat shock protein 90"/>
    <property type="match status" value="1"/>
</dbReference>
<dbReference type="Gene3D" id="3.30.230.80">
    <property type="match status" value="1"/>
</dbReference>
<dbReference type="Gene3D" id="3.40.50.11260">
    <property type="match status" value="1"/>
</dbReference>
<dbReference type="Gene3D" id="1.20.120.790">
    <property type="entry name" value="Heat shock protein 90, C-terminal domain"/>
    <property type="match status" value="1"/>
</dbReference>
<dbReference type="Gene3D" id="3.30.565.10">
    <property type="entry name" value="Histidine kinase-like ATPase, C-terminal domain"/>
    <property type="match status" value="1"/>
</dbReference>
<dbReference type="HAMAP" id="MF_00505">
    <property type="entry name" value="HSP90"/>
    <property type="match status" value="1"/>
</dbReference>
<dbReference type="InterPro" id="IPR036890">
    <property type="entry name" value="HATPase_C_sf"/>
</dbReference>
<dbReference type="InterPro" id="IPR019805">
    <property type="entry name" value="Heat_shock_protein_90_CS"/>
</dbReference>
<dbReference type="InterPro" id="IPR037196">
    <property type="entry name" value="HSP90_C"/>
</dbReference>
<dbReference type="InterPro" id="IPR001404">
    <property type="entry name" value="Hsp90_fam"/>
</dbReference>
<dbReference type="InterPro" id="IPR020575">
    <property type="entry name" value="Hsp90_N"/>
</dbReference>
<dbReference type="InterPro" id="IPR020568">
    <property type="entry name" value="Ribosomal_Su5_D2-typ_SF"/>
</dbReference>
<dbReference type="NCBIfam" id="NF003555">
    <property type="entry name" value="PRK05218.1"/>
    <property type="match status" value="1"/>
</dbReference>
<dbReference type="PANTHER" id="PTHR11528">
    <property type="entry name" value="HEAT SHOCK PROTEIN 90 FAMILY MEMBER"/>
    <property type="match status" value="1"/>
</dbReference>
<dbReference type="Pfam" id="PF13589">
    <property type="entry name" value="HATPase_c_3"/>
    <property type="match status" value="1"/>
</dbReference>
<dbReference type="Pfam" id="PF00183">
    <property type="entry name" value="HSP90"/>
    <property type="match status" value="1"/>
</dbReference>
<dbReference type="PIRSF" id="PIRSF002583">
    <property type="entry name" value="Hsp90"/>
    <property type="match status" value="1"/>
</dbReference>
<dbReference type="PRINTS" id="PR00775">
    <property type="entry name" value="HEATSHOCK90"/>
</dbReference>
<dbReference type="SMART" id="SM00387">
    <property type="entry name" value="HATPase_c"/>
    <property type="match status" value="1"/>
</dbReference>
<dbReference type="SUPFAM" id="SSF55874">
    <property type="entry name" value="ATPase domain of HSP90 chaperone/DNA topoisomerase II/histidine kinase"/>
    <property type="match status" value="1"/>
</dbReference>
<dbReference type="SUPFAM" id="SSF110942">
    <property type="entry name" value="HSP90 C-terminal domain"/>
    <property type="match status" value="1"/>
</dbReference>
<dbReference type="SUPFAM" id="SSF54211">
    <property type="entry name" value="Ribosomal protein S5 domain 2-like"/>
    <property type="match status" value="1"/>
</dbReference>
<dbReference type="PROSITE" id="PS00014">
    <property type="entry name" value="ER_TARGET"/>
    <property type="match status" value="1"/>
</dbReference>
<dbReference type="PROSITE" id="PS00298">
    <property type="entry name" value="HSP90"/>
    <property type="match status" value="1"/>
</dbReference>
<feature type="signal peptide" evidence="5">
    <location>
        <begin position="1"/>
        <end position="21"/>
    </location>
</feature>
<feature type="chain" id="PRO_0000013600" description="Endoplasmin">
    <location>
        <begin position="22"/>
        <end position="804"/>
    </location>
</feature>
<feature type="region of interest" description="Disordered" evidence="6">
    <location>
        <begin position="288"/>
        <end position="323"/>
    </location>
</feature>
<feature type="region of interest" description="Disordered" evidence="6">
    <location>
        <begin position="750"/>
        <end position="804"/>
    </location>
</feature>
<feature type="short sequence motif" description="SRT pseudosubstrate motif" evidence="2">
    <location>
        <begin position="42"/>
        <end position="44"/>
    </location>
</feature>
<feature type="short sequence motif" description="Prevents secretion from ER" evidence="5">
    <location>
        <begin position="801"/>
        <end position="804"/>
    </location>
</feature>
<feature type="compositionally biased region" description="Acidic residues" evidence="6">
    <location>
        <begin position="289"/>
        <end position="317"/>
    </location>
</feature>
<feature type="compositionally biased region" description="Acidic residues" evidence="6">
    <location>
        <begin position="757"/>
        <end position="793"/>
    </location>
</feature>
<feature type="binding site" evidence="3">
    <location>
        <position position="107"/>
    </location>
    <ligand>
        <name>ATP</name>
        <dbReference type="ChEBI" id="CHEBI:30616"/>
    </ligand>
</feature>
<feature type="binding site" evidence="3">
    <location>
        <position position="149"/>
    </location>
    <ligand>
        <name>ATP</name>
        <dbReference type="ChEBI" id="CHEBI:30616"/>
    </ligand>
</feature>
<feature type="binding site" evidence="3">
    <location>
        <position position="162"/>
    </location>
    <ligand>
        <name>ATP</name>
        <dbReference type="ChEBI" id="CHEBI:30616"/>
    </ligand>
</feature>
<feature type="binding site" evidence="3">
    <location>
        <position position="199"/>
    </location>
    <ligand>
        <name>ATP</name>
        <dbReference type="ChEBI" id="CHEBI:30616"/>
    </ligand>
</feature>
<feature type="site" description="Important for ATP hydrolysis" evidence="3">
    <location>
        <position position="448"/>
    </location>
</feature>
<feature type="modified residue" description="Phosphoserine" evidence="2">
    <location>
        <position position="64"/>
    </location>
</feature>
<feature type="modified residue" description="N6-(2-hydroxyisobutyryl)lysine" evidence="2">
    <location>
        <position position="168"/>
    </location>
</feature>
<feature type="modified residue" description="Phosphoserine" evidence="4">
    <location>
        <position position="172"/>
    </location>
</feature>
<feature type="modified residue" description="Phosphoserine" evidence="2">
    <location>
        <position position="306"/>
    </location>
</feature>
<feature type="modified residue" description="Phosphoserine" evidence="4">
    <location>
        <position position="403"/>
    </location>
</feature>
<feature type="modified residue" description="N6-succinyllysine" evidence="1">
    <location>
        <position position="404"/>
    </location>
</feature>
<feature type="modified residue" description="Phosphoserine" evidence="2">
    <location>
        <position position="447"/>
    </location>
</feature>
<feature type="modified residue" description="N6-acetyllysine" evidence="1">
    <location>
        <position position="479"/>
    </location>
</feature>
<feature type="modified residue" description="N6-succinyllysine" evidence="1">
    <location>
        <position position="633"/>
    </location>
</feature>
<feature type="glycosylation site" description="N-linked (GlcNAc...) asparagine" evidence="5">
    <location>
        <position position="62"/>
    </location>
</feature>
<feature type="glycosylation site" description="N-linked (GlcNAc...) asparagine" evidence="5">
    <location>
        <position position="107"/>
    </location>
</feature>
<feature type="glycosylation site" description="N-linked (GlcNAc...) asparagine" evidence="5">
    <location>
        <position position="217"/>
    </location>
</feature>
<feature type="glycosylation site" description="N-linked (GlcNAc...) asparagine" evidence="5">
    <location>
        <position position="445"/>
    </location>
</feature>
<feature type="glycosylation site" description="N-linked (GlcNAc...) asparagine" evidence="5">
    <location>
        <position position="481"/>
    </location>
</feature>
<feature type="glycosylation site" description="N-linked (GlcNAc...) asparagine" evidence="5">
    <location>
        <position position="502"/>
    </location>
</feature>
<feature type="disulfide bond" description="Interchain" evidence="1">
    <location>
        <position position="138"/>
    </location>
</feature>
<feature type="sequence conflict" description="In Ref. 2; CAA70347." evidence="7" ref="2">
    <original>V</original>
    <variation>I</variation>
    <location>
        <position position="48"/>
    </location>
</feature>
<feature type="sequence conflict" description="In Ref. 2; CAA70347." evidence="7" ref="2">
    <original>A</original>
    <variation>T</variation>
    <location>
        <position position="179"/>
    </location>
</feature>
<feature type="sequence conflict" description="In Ref. 3; CAA62352." evidence="7" ref="3">
    <original>DWE</original>
    <variation>ELG</variation>
    <location>
        <begin position="332"/>
        <end position="334"/>
    </location>
</feature>
<feature type="sequence conflict" description="In Ref. 3; CAA62352." evidence="7" ref="3">
    <original>E</original>
    <variation>EFVFQ</variation>
    <location>
        <position position="795"/>
    </location>
</feature>
<name>ENPL_PIG</name>
<protein>
    <recommendedName>
        <fullName>Endoplasmin</fullName>
        <ecNumber evidence="3">3.6.4.-</ecNumber>
    </recommendedName>
    <alternativeName>
        <fullName>94 kDa glucose-regulated protein</fullName>
        <shortName>GRP-94</shortName>
    </alternativeName>
    <alternativeName>
        <fullName>98 kDa protein kinase</fullName>
        <shortName>PPK 98</shortName>
        <shortName>ppk98</shortName>
    </alternativeName>
    <alternativeName>
        <fullName>Heat shock protein 90 kDa beta member 1</fullName>
    </alternativeName>
    <alternativeName>
        <fullName>gp96 homolog</fullName>
    </alternativeName>
</protein>
<accession>Q29092</accession>
<accession>O19070</accession>
<accession>Q29091</accession>
<comment type="function">
    <text evidence="1 2">ATP-dependent chaperone involved in the processing of proteins in the endoplasmic reticulum, regulating their transport. Together with MESD, acts as a modulator of the Wnt pathway by promoting the folding of LRP6, a coreceptor of the canonical Wnt pathway (By similarity). When associated with CNPY3, required for proper folding of Toll-like receptors (By similarity). Promotes folding and trafficking of TLR4 to the cell surface. May participate in the unfolding of cytosolic leaderless cargos (lacking the secretion signal sequence) such as the interleukin 1/IL-1 to facilitate their translocation into the ERGIC (endoplasmic reticulum-Golgi intermediate compartment) and secretion; the translocation process is mediated by the cargo receptor TMED10 (By similarity).</text>
</comment>
<comment type="catalytic activity">
    <reaction evidence="3">
        <text>ATP + H2O = ADP + phosphate + H(+)</text>
        <dbReference type="Rhea" id="RHEA:13065"/>
        <dbReference type="ChEBI" id="CHEBI:15377"/>
        <dbReference type="ChEBI" id="CHEBI:15378"/>
        <dbReference type="ChEBI" id="CHEBI:30616"/>
        <dbReference type="ChEBI" id="CHEBI:43474"/>
        <dbReference type="ChEBI" id="CHEBI:456216"/>
    </reaction>
    <physiologicalReaction direction="left-to-right" evidence="3">
        <dbReference type="Rhea" id="RHEA:13066"/>
    </physiologicalReaction>
</comment>
<comment type="subunit">
    <text evidence="1 2">Homodimer; disulfide-linked. Component of an EIF2 complex at least composed of CELF1/CUGBP1, CALR, CALR3, EIF2S1, EIF2S2, HSP90B1 and HSPA5 (By similarity). Part of a large chaperone multiprotein complex comprising DNAJB11, HSP90B1, HSPA5, HYOU, PDIA2, PDIA4, PDIA6, PPIB, SDF2L1, UGGT1 and very small amounts of ERP29, but not, or at very low levels, CALR nor CANX. Interacts with AIMP1; regulates its retention in the endoplasmic reticulum. Hyperglycosylated form interacts with OS9; promoting its degradation by the endoplasmic reticulum associated degradation (ERAD) (By similarity). Interacts with CNPY3. This interaction is disrupted in the presence of ATP (By similarity). Interacts with TLR4 and TLR9, but not with TLR3 (By similarity). Interacts with MZB1 in a calcium-dependent manner (By similarity). Interacts with METTL23. Interacts with IL1B; the interaction facilitates cargo translocation into the ERGIC. Interacts with EIF2AK3 (By similarity).</text>
</comment>
<comment type="subcellular location">
    <subcellularLocation>
        <location evidence="2">Endoplasmic reticulum lumen</location>
    </subcellularLocation>
    <subcellularLocation>
        <location evidence="3">Sarcoplasmic reticulum lumen</location>
    </subcellularLocation>
    <subcellularLocation>
        <location evidence="2">Melanosome</location>
    </subcellularLocation>
</comment>
<comment type="domain">
    <text evidence="2">The SRT pseudosubstrate motif associates with STT3A during translation in normal conditions, preventing glycosylation of facultative sites until HSP90B1 folding is completed.</text>
</comment>
<comment type="PTM">
    <text evidence="3">Phosphorylated by CK2.</text>
</comment>
<comment type="PTM">
    <text evidence="2">N-glycosylated cotranslationally at Asn-217 by STT3A-containing OST-A complex: this glycosylation is constitutive. In response to various stress, 5 additional facultative sites (Asn-62, Asn-107, Asn-445, Asn-481 and Asn-502) can be glycosylated post-translationally by STT3B-containing OST-B complex, leading to a hyperglycosylated form that is degraded by the ER-associated degradation (ERAD) pathway. In normal conditions, the OST-A complex together with CCDC134 prevent glycosylation at facultative sites during protein folding, thereby preventing hyperglycosylation. Mechanistically, nascent HSP90B1 is tethered during translation to a specialized CCDC134-containing translocon that forms a microenvironment for its folding, in which STT3A associates with the SRT pseudosubstrate motif, and prevents access to facultative glycosylation sites until folding is completed, rendering its facultative sites inaccessible to the OST-B complex.</text>
</comment>
<comment type="similarity">
    <text evidence="7">Belongs to the heat shock protein 90 family.</text>
</comment>
<reference key="1">
    <citation type="journal article" date="1994" name="Eur. J. Biochem.">
        <title>A protein kinase isolated from porcine brain microvessels is similar to a class of heat-shock proteins.</title>
        <authorList>
            <person name="Dechert U."/>
            <person name="Weber P."/>
            <person name="Koenig B."/>
            <person name="Ortwein C."/>
            <person name="Nilson I."/>
            <person name="Linxweiler W."/>
            <person name="Wollny E."/>
            <person name="Gassen H.G."/>
        </authorList>
    </citation>
    <scope>NUCLEOTIDE SEQUENCE [MRNA]</scope>
    <source>
        <tissue>Brain</tissue>
    </source>
</reference>
<reference key="2">
    <citation type="submission" date="1996-10" db="EMBL/GenBank/DDBJ databases">
        <title>Structurally related high density lipoprotein-binding proteins in liver I: identification as gp96/GRP94.</title>
        <authorList>
            <person name="de Crom R.P.G."/>
            <person name="van Haperen R."/>
            <person name="Janssens R."/>
            <person name="Visser P."/>
            <person name="van der Kamp A.W.M."/>
        </authorList>
    </citation>
    <scope>NUCLEOTIDE SEQUENCE [MRNA]</scope>
    <source>
        <tissue>Liver</tissue>
    </source>
</reference>
<reference key="3">
    <citation type="journal article" date="1997" name="DNA Cell Biol.">
        <title>Cloning and characterization of a porcine protein kinase gene and relationship to a class of heat shock proteins.</title>
        <authorList>
            <person name="Koenig B."/>
            <person name="Seehaus B."/>
            <person name="Bangsow T."/>
            <person name="Bangsow T."/>
            <person name="Henninger J."/>
            <person name="Weber P."/>
            <person name="Schepelmann S."/>
            <person name="Wollny E."/>
            <person name="Gassen H.G."/>
        </authorList>
    </citation>
    <scope>NUCLEOTIDE SEQUENCE [GENOMIC DNA]</scope>
    <source>
        <tissue>Liver</tissue>
    </source>
</reference>
<proteinExistence type="evidence at transcript level"/>
<gene>
    <name type="primary">HSP90B1</name>
    <name type="synonym">GRP94</name>
    <name evidence="2" type="synonym">HSPC4</name>
    <name type="synonym">TRA1</name>
</gene>